<reference key="1">
    <citation type="journal article" date="2006" name="Science">
        <title>Genomic islands and the ecology and evolution of Prochlorococcus.</title>
        <authorList>
            <person name="Coleman M.L."/>
            <person name="Sullivan M.B."/>
            <person name="Martiny A.C."/>
            <person name="Steglich C."/>
            <person name="Barry K."/>
            <person name="Delong E.F."/>
            <person name="Chisholm S.W."/>
        </authorList>
    </citation>
    <scope>NUCLEOTIDE SEQUENCE [LARGE SCALE GENOMIC DNA]</scope>
    <source>
        <strain>MIT 9312</strain>
    </source>
</reference>
<dbReference type="EC" id="6.3.4.2" evidence="1"/>
<dbReference type="EMBL" id="CP000111">
    <property type="protein sequence ID" value="ABB50843.1"/>
    <property type="molecule type" value="Genomic_DNA"/>
</dbReference>
<dbReference type="RefSeq" id="WP_011377324.1">
    <property type="nucleotide sequence ID" value="NC_007577.1"/>
</dbReference>
<dbReference type="SMR" id="Q317V2"/>
<dbReference type="STRING" id="74546.PMT9312_1782"/>
<dbReference type="MEROPS" id="C26.964"/>
<dbReference type="KEGG" id="pmi:PMT9312_1782"/>
<dbReference type="eggNOG" id="COG0504">
    <property type="taxonomic scope" value="Bacteria"/>
</dbReference>
<dbReference type="HOGENOM" id="CLU_011675_5_0_3"/>
<dbReference type="OrthoDB" id="9801107at2"/>
<dbReference type="UniPathway" id="UPA00159">
    <property type="reaction ID" value="UER00277"/>
</dbReference>
<dbReference type="Proteomes" id="UP000002715">
    <property type="component" value="Chromosome"/>
</dbReference>
<dbReference type="GO" id="GO:0005829">
    <property type="term" value="C:cytosol"/>
    <property type="evidence" value="ECO:0007669"/>
    <property type="project" value="TreeGrafter"/>
</dbReference>
<dbReference type="GO" id="GO:0005524">
    <property type="term" value="F:ATP binding"/>
    <property type="evidence" value="ECO:0007669"/>
    <property type="project" value="UniProtKB-KW"/>
</dbReference>
<dbReference type="GO" id="GO:0003883">
    <property type="term" value="F:CTP synthase activity"/>
    <property type="evidence" value="ECO:0007669"/>
    <property type="project" value="UniProtKB-UniRule"/>
</dbReference>
<dbReference type="GO" id="GO:0004359">
    <property type="term" value="F:glutaminase activity"/>
    <property type="evidence" value="ECO:0007669"/>
    <property type="project" value="RHEA"/>
</dbReference>
<dbReference type="GO" id="GO:0042802">
    <property type="term" value="F:identical protein binding"/>
    <property type="evidence" value="ECO:0007669"/>
    <property type="project" value="TreeGrafter"/>
</dbReference>
<dbReference type="GO" id="GO:0046872">
    <property type="term" value="F:metal ion binding"/>
    <property type="evidence" value="ECO:0007669"/>
    <property type="project" value="UniProtKB-KW"/>
</dbReference>
<dbReference type="GO" id="GO:0044210">
    <property type="term" value="P:'de novo' CTP biosynthetic process"/>
    <property type="evidence" value="ECO:0007669"/>
    <property type="project" value="UniProtKB-UniRule"/>
</dbReference>
<dbReference type="GO" id="GO:0019856">
    <property type="term" value="P:pyrimidine nucleobase biosynthetic process"/>
    <property type="evidence" value="ECO:0007669"/>
    <property type="project" value="TreeGrafter"/>
</dbReference>
<dbReference type="CDD" id="cd03113">
    <property type="entry name" value="CTPS_N"/>
    <property type="match status" value="1"/>
</dbReference>
<dbReference type="CDD" id="cd01746">
    <property type="entry name" value="GATase1_CTP_Synthase"/>
    <property type="match status" value="1"/>
</dbReference>
<dbReference type="FunFam" id="3.40.50.300:FF:000009">
    <property type="entry name" value="CTP synthase"/>
    <property type="match status" value="1"/>
</dbReference>
<dbReference type="FunFam" id="3.40.50.880:FF:000002">
    <property type="entry name" value="CTP synthase"/>
    <property type="match status" value="1"/>
</dbReference>
<dbReference type="Gene3D" id="3.40.50.880">
    <property type="match status" value="1"/>
</dbReference>
<dbReference type="Gene3D" id="3.40.50.300">
    <property type="entry name" value="P-loop containing nucleotide triphosphate hydrolases"/>
    <property type="match status" value="1"/>
</dbReference>
<dbReference type="HAMAP" id="MF_01227">
    <property type="entry name" value="PyrG"/>
    <property type="match status" value="1"/>
</dbReference>
<dbReference type="InterPro" id="IPR029062">
    <property type="entry name" value="Class_I_gatase-like"/>
</dbReference>
<dbReference type="InterPro" id="IPR004468">
    <property type="entry name" value="CTP_synthase"/>
</dbReference>
<dbReference type="InterPro" id="IPR017456">
    <property type="entry name" value="CTP_synthase_N"/>
</dbReference>
<dbReference type="InterPro" id="IPR017926">
    <property type="entry name" value="GATASE"/>
</dbReference>
<dbReference type="InterPro" id="IPR033828">
    <property type="entry name" value="GATase1_CTP_Synthase"/>
</dbReference>
<dbReference type="InterPro" id="IPR027417">
    <property type="entry name" value="P-loop_NTPase"/>
</dbReference>
<dbReference type="NCBIfam" id="NF003792">
    <property type="entry name" value="PRK05380.1"/>
    <property type="match status" value="1"/>
</dbReference>
<dbReference type="NCBIfam" id="TIGR00337">
    <property type="entry name" value="PyrG"/>
    <property type="match status" value="1"/>
</dbReference>
<dbReference type="PANTHER" id="PTHR11550">
    <property type="entry name" value="CTP SYNTHASE"/>
    <property type="match status" value="1"/>
</dbReference>
<dbReference type="PANTHER" id="PTHR11550:SF0">
    <property type="entry name" value="CTP SYNTHASE-RELATED"/>
    <property type="match status" value="1"/>
</dbReference>
<dbReference type="Pfam" id="PF06418">
    <property type="entry name" value="CTP_synth_N"/>
    <property type="match status" value="1"/>
</dbReference>
<dbReference type="Pfam" id="PF00117">
    <property type="entry name" value="GATase"/>
    <property type="match status" value="1"/>
</dbReference>
<dbReference type="SUPFAM" id="SSF52317">
    <property type="entry name" value="Class I glutamine amidotransferase-like"/>
    <property type="match status" value="1"/>
</dbReference>
<dbReference type="SUPFAM" id="SSF52540">
    <property type="entry name" value="P-loop containing nucleoside triphosphate hydrolases"/>
    <property type="match status" value="1"/>
</dbReference>
<dbReference type="PROSITE" id="PS51273">
    <property type="entry name" value="GATASE_TYPE_1"/>
    <property type="match status" value="1"/>
</dbReference>
<accession>Q317V2</accession>
<organism>
    <name type="scientific">Prochlorococcus marinus (strain MIT 9312)</name>
    <dbReference type="NCBI Taxonomy" id="74546"/>
    <lineage>
        <taxon>Bacteria</taxon>
        <taxon>Bacillati</taxon>
        <taxon>Cyanobacteriota</taxon>
        <taxon>Cyanophyceae</taxon>
        <taxon>Synechococcales</taxon>
        <taxon>Prochlorococcaceae</taxon>
        <taxon>Prochlorococcus</taxon>
    </lineage>
</organism>
<protein>
    <recommendedName>
        <fullName evidence="1">CTP synthase</fullName>
        <ecNumber evidence="1">6.3.4.2</ecNumber>
    </recommendedName>
    <alternativeName>
        <fullName evidence="1">Cytidine 5'-triphosphate synthase</fullName>
    </alternativeName>
    <alternativeName>
        <fullName evidence="1">Cytidine triphosphate synthetase</fullName>
        <shortName evidence="1">CTP synthetase</shortName>
        <shortName evidence="1">CTPS</shortName>
    </alternativeName>
    <alternativeName>
        <fullName evidence="1">UTP--ammonia ligase</fullName>
    </alternativeName>
</protein>
<gene>
    <name evidence="1" type="primary">pyrG</name>
    <name type="ordered locus">PMT9312_1782</name>
</gene>
<sequence length="536" mass="59665">MSKFVFVTGGVVSSIGKGIVAASLGRLLKSRGYSVSILKLDPYLNVDPGTMSPFQHGEVFVTEDGAETDLDLGHYERFTDTAMTRLNSVTTGSIYQAVINKERRGSYNGGTVQVIPHITREIRERIHRVASNSNADIIITEIGGTVGDIESLPFLEAIREFKNDVNRNDVAYIHVTLLPYIKTSGEIKTKPTQHSVKELRSIGIQPDLLVCRSDKSINEGLKKKLSGFCGVNINSVIEALDADSIYSVPLSLKKEGLCKETLKYLELEDKECDLKNWEKLVHNLRNPGTPIKVALVGKYIELGDAYLSVVEALRHACIEQKALLDLHWVSAEMIEKDSAETYLNEVDAIVVPGGFGNRGVNGKISAIKFARENKIPFLGLCLGMQCAVIEWARNVANLPDASSSELDPKTPNPVIHLLPEQEDVVDLGGTMRLGVYPCRLTNNTIGKKLYDEDVIYERHRHRYEFNNYYKQSFLNSGYKISGTSPDGRLVELIELDNHPYFLACQYHPEFLSRPGKPHPLFKGLIKSSQENLTQSN</sequence>
<evidence type="ECO:0000255" key="1">
    <source>
        <dbReference type="HAMAP-Rule" id="MF_01227"/>
    </source>
</evidence>
<name>PYRG_PROM9</name>
<comment type="function">
    <text evidence="1">Catalyzes the ATP-dependent amination of UTP to CTP with either L-glutamine or ammonia as the source of nitrogen. Regulates intracellular CTP levels through interactions with the four ribonucleotide triphosphates.</text>
</comment>
<comment type="catalytic activity">
    <reaction evidence="1">
        <text>UTP + L-glutamine + ATP + H2O = CTP + L-glutamate + ADP + phosphate + 2 H(+)</text>
        <dbReference type="Rhea" id="RHEA:26426"/>
        <dbReference type="ChEBI" id="CHEBI:15377"/>
        <dbReference type="ChEBI" id="CHEBI:15378"/>
        <dbReference type="ChEBI" id="CHEBI:29985"/>
        <dbReference type="ChEBI" id="CHEBI:30616"/>
        <dbReference type="ChEBI" id="CHEBI:37563"/>
        <dbReference type="ChEBI" id="CHEBI:43474"/>
        <dbReference type="ChEBI" id="CHEBI:46398"/>
        <dbReference type="ChEBI" id="CHEBI:58359"/>
        <dbReference type="ChEBI" id="CHEBI:456216"/>
        <dbReference type="EC" id="6.3.4.2"/>
    </reaction>
</comment>
<comment type="catalytic activity">
    <reaction evidence="1">
        <text>L-glutamine + H2O = L-glutamate + NH4(+)</text>
        <dbReference type="Rhea" id="RHEA:15889"/>
        <dbReference type="ChEBI" id="CHEBI:15377"/>
        <dbReference type="ChEBI" id="CHEBI:28938"/>
        <dbReference type="ChEBI" id="CHEBI:29985"/>
        <dbReference type="ChEBI" id="CHEBI:58359"/>
    </reaction>
</comment>
<comment type="catalytic activity">
    <reaction evidence="1">
        <text>UTP + NH4(+) + ATP = CTP + ADP + phosphate + 2 H(+)</text>
        <dbReference type="Rhea" id="RHEA:16597"/>
        <dbReference type="ChEBI" id="CHEBI:15378"/>
        <dbReference type="ChEBI" id="CHEBI:28938"/>
        <dbReference type="ChEBI" id="CHEBI:30616"/>
        <dbReference type="ChEBI" id="CHEBI:37563"/>
        <dbReference type="ChEBI" id="CHEBI:43474"/>
        <dbReference type="ChEBI" id="CHEBI:46398"/>
        <dbReference type="ChEBI" id="CHEBI:456216"/>
    </reaction>
</comment>
<comment type="activity regulation">
    <text evidence="1">Allosterically activated by GTP, when glutamine is the substrate; GTP has no effect on the reaction when ammonia is the substrate. The allosteric effector GTP functions by stabilizing the protein conformation that binds the tetrahedral intermediate(s) formed during glutamine hydrolysis. Inhibited by the product CTP, via allosteric rather than competitive inhibition.</text>
</comment>
<comment type="pathway">
    <text evidence="1">Pyrimidine metabolism; CTP biosynthesis via de novo pathway; CTP from UDP: step 2/2.</text>
</comment>
<comment type="subunit">
    <text evidence="1">Homotetramer.</text>
</comment>
<comment type="miscellaneous">
    <text evidence="1">CTPSs have evolved a hybrid strategy for distinguishing between UTP and CTP. The overlapping regions of the product feedback inhibitory and substrate sites recognize a common feature in both compounds, the triphosphate moiety. To differentiate isosteric substrate and product pyrimidine rings, an additional pocket far from the expected kinase/ligase catalytic site, specifically recognizes the cytosine and ribose portions of the product inhibitor.</text>
</comment>
<comment type="similarity">
    <text evidence="1">Belongs to the CTP synthase family.</text>
</comment>
<keyword id="KW-0067">ATP-binding</keyword>
<keyword id="KW-0315">Glutamine amidotransferase</keyword>
<keyword id="KW-0436">Ligase</keyword>
<keyword id="KW-0460">Magnesium</keyword>
<keyword id="KW-0479">Metal-binding</keyword>
<keyword id="KW-0547">Nucleotide-binding</keyword>
<keyword id="KW-0665">Pyrimidine biosynthesis</keyword>
<proteinExistence type="inferred from homology"/>
<feature type="chain" id="PRO_0000266177" description="CTP synthase">
    <location>
        <begin position="1"/>
        <end position="536"/>
    </location>
</feature>
<feature type="domain" description="Glutamine amidotransferase type-1" evidence="1">
    <location>
        <begin position="292"/>
        <end position="534"/>
    </location>
</feature>
<feature type="region of interest" description="Amidoligase domain" evidence="1">
    <location>
        <begin position="1"/>
        <end position="267"/>
    </location>
</feature>
<feature type="active site" description="Nucleophile; for glutamine hydrolysis" evidence="1">
    <location>
        <position position="381"/>
    </location>
</feature>
<feature type="active site" evidence="1">
    <location>
        <position position="507"/>
    </location>
</feature>
<feature type="active site" evidence="1">
    <location>
        <position position="509"/>
    </location>
</feature>
<feature type="binding site" evidence="1">
    <location>
        <position position="13"/>
    </location>
    <ligand>
        <name>CTP</name>
        <dbReference type="ChEBI" id="CHEBI:37563"/>
        <note>allosteric inhibitor</note>
    </ligand>
</feature>
<feature type="binding site" evidence="1">
    <location>
        <position position="13"/>
    </location>
    <ligand>
        <name>UTP</name>
        <dbReference type="ChEBI" id="CHEBI:46398"/>
    </ligand>
</feature>
<feature type="binding site" evidence="1">
    <location>
        <begin position="14"/>
        <end position="19"/>
    </location>
    <ligand>
        <name>ATP</name>
        <dbReference type="ChEBI" id="CHEBI:30616"/>
    </ligand>
</feature>
<feature type="binding site" evidence="1">
    <location>
        <position position="71"/>
    </location>
    <ligand>
        <name>ATP</name>
        <dbReference type="ChEBI" id="CHEBI:30616"/>
    </ligand>
</feature>
<feature type="binding site" evidence="1">
    <location>
        <position position="71"/>
    </location>
    <ligand>
        <name>Mg(2+)</name>
        <dbReference type="ChEBI" id="CHEBI:18420"/>
    </ligand>
</feature>
<feature type="binding site" evidence="1">
    <location>
        <position position="141"/>
    </location>
    <ligand>
        <name>Mg(2+)</name>
        <dbReference type="ChEBI" id="CHEBI:18420"/>
    </ligand>
</feature>
<feature type="binding site" evidence="1">
    <location>
        <begin position="148"/>
        <end position="150"/>
    </location>
    <ligand>
        <name>CTP</name>
        <dbReference type="ChEBI" id="CHEBI:37563"/>
        <note>allosteric inhibitor</note>
    </ligand>
</feature>
<feature type="binding site" evidence="1">
    <location>
        <begin position="188"/>
        <end position="193"/>
    </location>
    <ligand>
        <name>CTP</name>
        <dbReference type="ChEBI" id="CHEBI:37563"/>
        <note>allosteric inhibitor</note>
    </ligand>
</feature>
<feature type="binding site" evidence="1">
    <location>
        <begin position="188"/>
        <end position="193"/>
    </location>
    <ligand>
        <name>UTP</name>
        <dbReference type="ChEBI" id="CHEBI:46398"/>
    </ligand>
</feature>
<feature type="binding site" evidence="1">
    <location>
        <position position="224"/>
    </location>
    <ligand>
        <name>CTP</name>
        <dbReference type="ChEBI" id="CHEBI:37563"/>
        <note>allosteric inhibitor</note>
    </ligand>
</feature>
<feature type="binding site" evidence="1">
    <location>
        <position position="224"/>
    </location>
    <ligand>
        <name>UTP</name>
        <dbReference type="ChEBI" id="CHEBI:46398"/>
    </ligand>
</feature>
<feature type="binding site" evidence="1">
    <location>
        <position position="354"/>
    </location>
    <ligand>
        <name>L-glutamine</name>
        <dbReference type="ChEBI" id="CHEBI:58359"/>
    </ligand>
</feature>
<feature type="binding site" evidence="1">
    <location>
        <begin position="382"/>
        <end position="385"/>
    </location>
    <ligand>
        <name>L-glutamine</name>
        <dbReference type="ChEBI" id="CHEBI:58359"/>
    </ligand>
</feature>
<feature type="binding site" evidence="1">
    <location>
        <position position="405"/>
    </location>
    <ligand>
        <name>L-glutamine</name>
        <dbReference type="ChEBI" id="CHEBI:58359"/>
    </ligand>
</feature>
<feature type="binding site" evidence="1">
    <location>
        <position position="462"/>
    </location>
    <ligand>
        <name>L-glutamine</name>
        <dbReference type="ChEBI" id="CHEBI:58359"/>
    </ligand>
</feature>